<gene>
    <name type="ordered locus">CGSHiGG_00425</name>
</gene>
<protein>
    <recommendedName>
        <fullName evidence="1">UPF0260 protein CGSHiGG_00425</fullName>
    </recommendedName>
</protein>
<feature type="chain" id="PRO_1000044797" description="UPF0260 protein CGSHiGG_00425">
    <location>
        <begin position="1"/>
        <end position="150"/>
    </location>
</feature>
<dbReference type="EMBL" id="CP000672">
    <property type="protein sequence ID" value="ABQ99196.1"/>
    <property type="molecule type" value="Genomic_DNA"/>
</dbReference>
<dbReference type="KEGG" id="hiq:CGSHiGG_00425"/>
<dbReference type="HOGENOM" id="CLU_109769_2_0_6"/>
<dbReference type="Proteomes" id="UP000001990">
    <property type="component" value="Chromosome"/>
</dbReference>
<dbReference type="HAMAP" id="MF_00676">
    <property type="entry name" value="UPF0260"/>
    <property type="match status" value="1"/>
</dbReference>
<dbReference type="InterPro" id="IPR005358">
    <property type="entry name" value="Puta_zinc/iron-chelating_dom"/>
</dbReference>
<dbReference type="InterPro" id="IPR008228">
    <property type="entry name" value="UCP006173"/>
</dbReference>
<dbReference type="NCBIfam" id="NF003499">
    <property type="entry name" value="PRK05170.1-2"/>
    <property type="match status" value="1"/>
</dbReference>
<dbReference type="PANTHER" id="PTHR37421">
    <property type="entry name" value="UPF0260 PROTEIN YCGN"/>
    <property type="match status" value="1"/>
</dbReference>
<dbReference type="PANTHER" id="PTHR37421:SF1">
    <property type="entry name" value="UPF0260 PROTEIN YCGN"/>
    <property type="match status" value="1"/>
</dbReference>
<dbReference type="Pfam" id="PF03692">
    <property type="entry name" value="CxxCxxCC"/>
    <property type="match status" value="1"/>
</dbReference>
<dbReference type="PIRSF" id="PIRSF006173">
    <property type="entry name" value="UCP006173"/>
    <property type="match status" value="1"/>
</dbReference>
<comment type="similarity">
    <text evidence="1">Belongs to the UPF0260 family.</text>
</comment>
<proteinExistence type="inferred from homology"/>
<reference key="1">
    <citation type="journal article" date="2007" name="Genome Biol.">
        <title>Characterization and modeling of the Haemophilus influenzae core and supragenomes based on the complete genomic sequences of Rd and 12 clinical nontypeable strains.</title>
        <authorList>
            <person name="Hogg J.S."/>
            <person name="Hu F.Z."/>
            <person name="Janto B."/>
            <person name="Boissy R."/>
            <person name="Hayes J."/>
            <person name="Keefe R."/>
            <person name="Post J.C."/>
            <person name="Ehrlich G.D."/>
        </authorList>
    </citation>
    <scope>NUCLEOTIDE SEQUENCE [LARGE SCALE GENOMIC DNA]</scope>
    <source>
        <strain>PittGG</strain>
    </source>
</reference>
<sequence>MQLEPNFWQTKSLLEMTESEWEALCDGCGKCCYRKYIQGRGKRQKLYYTRIACNLLDLETGKCGNYSERFNIETDCTKLTKKNLPDFHWLPDTCAYRLLYEGKTLPEWHPLISGSPHSVKNADILIKNGIHERDVIDWFEFIIDEDHTFK</sequence>
<organism>
    <name type="scientific">Haemophilus influenzae (strain PittGG)</name>
    <dbReference type="NCBI Taxonomy" id="374931"/>
    <lineage>
        <taxon>Bacteria</taxon>
        <taxon>Pseudomonadati</taxon>
        <taxon>Pseudomonadota</taxon>
        <taxon>Gammaproteobacteria</taxon>
        <taxon>Pasteurellales</taxon>
        <taxon>Pasteurellaceae</taxon>
        <taxon>Haemophilus</taxon>
    </lineage>
</organism>
<accession>A5UEJ1</accession>
<evidence type="ECO:0000255" key="1">
    <source>
        <dbReference type="HAMAP-Rule" id="MF_00676"/>
    </source>
</evidence>
<name>Y425_HAEIG</name>